<reference key="1">
    <citation type="journal article" date="1987" name="J. Virol.">
        <title>Analysis of the complete nucleotide sequence of the picornavirus Theiler's murine encephalomyelitis virus indicates that it is closely related to cardioviruses.</title>
        <authorList>
            <person name="Pevear D.C."/>
            <person name="Calenoff M."/>
            <person name="Rozhon E."/>
            <person name="Lipton H.L."/>
        </authorList>
    </citation>
    <scope>NUCLEOTIDE SEQUENCE [GENOMIC RNA]</scope>
</reference>
<reference key="2">
    <citation type="journal article" date="2011" name="J. Virol.">
        <title>The leader protein of cardioviruses inhibits stress granule assembly.</title>
        <authorList>
            <person name="Borghese F."/>
            <person name="Michiels T."/>
        </authorList>
    </citation>
    <scope>FUNCTION (LEADER PROTEIN)</scope>
</reference>
<reference key="3">
    <citation type="journal article" date="2014" name="J. Virol.">
        <title>Binding interactions between the encephalomyocarditis virus leader and protein 2A.</title>
        <authorList>
            <person name="Petty R.V."/>
            <person name="Basta H.A."/>
            <person name="Bacot-Davis V.R."/>
            <person name="Brown B.A."/>
            <person name="Palmenberg A.C."/>
        </authorList>
    </citation>
    <scope>INTERACTION WITH THE LEADER PROTEIN (PROTEIN 2A)</scope>
    <scope>INTERACTION WITH PROTEIN 2A (LEADER PROTEIN)</scope>
    <scope>FUNCTION (PROTEIN 2A)</scope>
</reference>
<reference key="4">
    <citation type="journal article" date="2015" name="Virology">
        <title>Three cardiovirus leader proteins equivalently inhibit four different nucleocytoplasmic trafficking pathways.</title>
        <authorList>
            <person name="Ciomperlik J.J."/>
            <person name="Basta H.A."/>
            <person name="Palmenberg A.C."/>
        </authorList>
    </citation>
    <scope>FUNCTION (LEADER PROTEIN)</scope>
</reference>
<reference key="5">
    <citation type="journal article" date="2019" name="J. Virol.">
        <title>The Leader Protein of Theiler's Virus Prevents the Activation of PKR.</title>
        <authorList>
            <person name="Borghese F."/>
            <person name="Sorgeloos F."/>
            <person name="Cesaro T."/>
            <person name="Michiels T."/>
        </authorList>
    </citation>
    <scope>FUNCTION</scope>
</reference>
<reference key="6">
    <citation type="journal article" date="1992" name="Proc. Natl. Acad. Sci. U.S.A.">
        <title>Three-dimensional structure of Theiler murine encephalomyelitis virus (BeAn strain).</title>
        <authorList>
            <person name="Luo M."/>
            <person name="He C."/>
            <person name="Toth K.S."/>
            <person name="Zhang C.X."/>
            <person name="Lipton H.L."/>
        </authorList>
    </citation>
    <scope>X-RAY CRYSTALLOGRAPHY (3.5 ANGSTROMS) OF 148-922</scope>
</reference>
<comment type="function">
    <molecule>Leader protein</molecule>
    <text evidence="9 11 18 20">Forms a complex with host RAN and probably binds to exportins carrying activated MAPK in order to mediate the hyperphosphorylation of host Phe/Gly containing nuclear pore proteins (Nups) resulting in cessation of active nucleocytoplasmic transport (Probable). Proteins with NLS signals fail to import, cellular mRNAs fail to export, and some proteins small enough for diffusion are not retained anymore (efflux) (By similarity). The resulting inhibition of cellular protein synthesis serves to ensure maximal viral gene expression and to evade host immune response (By similarity). The leader protein also inhibits host interferon regulatory factor 3 (IRF3) dimerization, thereby blocking the transcriptional activation of IFN genes (By similarity). Binds to host RNase L thereby preventing its activation by 2'-5' oligoadenylates in order to counteract the antiviral interferon-inducible OAS/RNase L pathway (By similarity). Inhibits the integrated stress response (ISR) in the infected cell. Inhibits the host EIF2AK2/PKR by rendering this kinase unable to detect double-stranded RNA. Also impairs host stress granule formation probably by acting on a step downstream of EIF2AK2/PKR activation (PubMed:31292248).</text>
</comment>
<comment type="function">
    <molecule>Capsid protein VP1</molecule>
    <text evidence="2">Forms an icosahedral capsid of pseudo T=3 symmetry with capsid proteins VP2 and VP3. Together they form an icosahedral capsid composed of 60 copies of each VP1, VP2, and VP3, with a diameter of approximately 300 Angstroms. VP4 lies on the inner surface of the protein shell formed by VP1, VP2 and VP3. All the three latter proteins contain a beta-sheet structure called beta-barrel jelly roll. VP1 is situated at the 12 fivefold axes, whereas VP2 and VP3 are located at the quasi-sixfold axes.</text>
</comment>
<comment type="function">
    <molecule>Capsid protein VP2</molecule>
    <text evidence="2">Forms an icosahedral capsid of pseudo T=3 symmetry with capsid proteins VP2 and VP3. Together they form an icosahedral capsid composed of 60 copies of each VP1, VP2, and VP3, with a diameter of approximately 300 Angstroms. VP4 lies on the inner surface of the protein shell formed by VP1, VP2 and VP3. All the three latter proteins contain a beta-sheet structure called beta-barrel jelly roll. VP1 is situated at the 12 fivefold axes, whereas VP2 and VP3 are located at the quasi-sixfold axes.</text>
</comment>
<comment type="function">
    <molecule>Capsid protein VP3</molecule>
    <text evidence="2">Forms an icosahedral capsid of pseudo T=3 symmetry with capsid proteins VP2 and VP3. Together they form an icosahedral capsid composed of 60 copies of each VP1, VP2, and VP3, with a diameter of approximately 300 Angstroms. VP4 lies on the inner surface of the protein shell formed by VP1, VP2 and VP3. All the three latter proteins contain a beta-sheet structure called beta-barrel jelly roll. VP1 is situated at the 12 fivefold axes, whereas VP2 and VP3 are located at the quasi-sixfold axes.</text>
</comment>
<comment type="function">
    <molecule>Capsid protein VP4</molecule>
    <text evidence="2 3">Lies on the inner surface of the capsid shell (By similarity). After binding to the host receptor, the capsid undergoes conformational changes (By similarity). Capsid protein VP4 is released, capsid protein VP1 N-terminus is externalized, and together, they shape a pore in the host membrane through which the viral genome is translocated into the host cell cytoplasm (By similarity). After genome has been released, the channel shrinks (By similarity).</text>
</comment>
<comment type="function">
    <molecule>Capsid protein VP0</molecule>
    <text evidence="7">VP0 precursor is a component of immature procapsids.</text>
</comment>
<comment type="function">
    <molecule>Protein 2A</molecule>
    <text evidence="11 17">Involved in host translation shutoff by inhibiting cap-dependent mRNA translation (By similarity). Nuclear localization is required for this function (By similarity). The resulting inhibition of cellular protein synthesis serves to ensure maximal viral gene expression and to evade host immune response (By similarity). Inhibits the phosphorylation of the leader protein (PubMed:25210192).</text>
</comment>
<comment type="function">
    <molecule>Protein 2B</molecule>
    <text evidence="1">Affects membrane integrity and causes an increase in membrane permeability.</text>
</comment>
<comment type="function">
    <molecule>Protein 2C</molecule>
    <text evidence="5 6">Associates with and induces structural rearrangements of intracellular membranes (By similarity). It displays RNA-binding, nucleotide binding and NTPase activities (By similarity).</text>
</comment>
<comment type="function">
    <molecule>Protein 3A</molecule>
    <text evidence="1">Serves as membrane anchor via its hydrophobic domain.</text>
</comment>
<comment type="function">
    <molecule>VPg</molecule>
    <text evidence="4">Forms a primer, VPg-pU, which is utilized by the polymerase for the initiation of RNA chains.</text>
</comment>
<comment type="function">
    <molecule>Protease 3C</molecule>
    <text evidence="4 8">Cysteine protease that generates mature viral proteins from the precursor polyprotein (By similarity). In addition to its proteolytic activity, it binds to viral RNA, and thus influences viral genome replication. RNA and substrate cooperatively bind to the protease. Cleaves host PABP1, this cleavage is important for viral replication (By similarity).</text>
</comment>
<comment type="function">
    <molecule>RNA-directed RNA polymerase</molecule>
    <text evidence="8">Replicates the genomic and antigenomic RNAs by recognizing replications specific signals (By similarity). Performs VPg uridylylation (By similarity).</text>
</comment>
<comment type="catalytic activity">
    <reaction evidence="13">
        <text>RNA(n) + a ribonucleoside 5'-triphosphate = RNA(n+1) + diphosphate</text>
        <dbReference type="Rhea" id="RHEA:21248"/>
        <dbReference type="Rhea" id="RHEA-COMP:14527"/>
        <dbReference type="Rhea" id="RHEA-COMP:17342"/>
        <dbReference type="ChEBI" id="CHEBI:33019"/>
        <dbReference type="ChEBI" id="CHEBI:61557"/>
        <dbReference type="ChEBI" id="CHEBI:140395"/>
        <dbReference type="EC" id="2.7.7.48"/>
    </reaction>
</comment>
<comment type="catalytic activity">
    <reaction evidence="19">
        <text>ATP + H2O = ADP + phosphate + H(+)</text>
        <dbReference type="Rhea" id="RHEA:13065"/>
        <dbReference type="ChEBI" id="CHEBI:15377"/>
        <dbReference type="ChEBI" id="CHEBI:15378"/>
        <dbReference type="ChEBI" id="CHEBI:30616"/>
        <dbReference type="ChEBI" id="CHEBI:43474"/>
        <dbReference type="ChEBI" id="CHEBI:456216"/>
        <dbReference type="EC" id="3.6.4.13"/>
    </reaction>
</comment>
<comment type="catalytic activity">
    <reaction evidence="15">
        <text>Selective cleavage of Gln-|-Gly bond in the poliovirus polyprotein. In other picornavirus reactions Glu may be substituted for Gln, and Ser or Thr for Gly.</text>
        <dbReference type="EC" id="3.4.22.28"/>
    </reaction>
</comment>
<comment type="subunit">
    <molecule>Protein 2A</molecule>
    <text evidence="9 11 17">Interacts with host EIF4E (By similarity). Interacts with the leader protein (PubMed:25210192).</text>
</comment>
<comment type="subunit">
    <molecule>Leader protein</molecule>
    <text evidence="9 11 17">Interacts with host RAN; the complex L-RAN recruits cellular kinases responsible for the L-induced nucleocytoplasmic trafficking inhibition (By similarity). The complex L-RAN can further bind to the host exportins XPO1/CRM1 and CSE1L/CAS (By similarity). Interacts with the protein 2A (PubMed:25210192). Interacts with host RNASEL; this interaction prevents RNASEL activation by its substrate 2'-5' oligoadenylates (By similarity).</text>
</comment>
<comment type="subcellular location">
    <molecule>Capsid protein VP2</molecule>
    <subcellularLocation>
        <location evidence="2">Virion</location>
    </subcellularLocation>
    <subcellularLocation>
        <location evidence="19">Host cytoplasm</location>
    </subcellularLocation>
</comment>
<comment type="subcellular location">
    <molecule>Capsid protein VP3</molecule>
    <subcellularLocation>
        <location evidence="2">Virion</location>
    </subcellularLocation>
    <subcellularLocation>
        <location evidence="19">Host cytoplasm</location>
    </subcellularLocation>
</comment>
<comment type="subcellular location">
    <molecule>Capsid protein VP1</molecule>
    <subcellularLocation>
        <location evidence="2">Virion</location>
    </subcellularLocation>
    <subcellularLocation>
        <location evidence="19">Host cytoplasm</location>
    </subcellularLocation>
</comment>
<comment type="subcellular location">
    <molecule>Protein 2A</molecule>
    <subcellularLocation>
        <location evidence="11">Host nucleus</location>
        <location evidence="11">Host nucleolus</location>
    </subcellularLocation>
</comment>
<comment type="subcellular location">
    <molecule>Protein 2B</molecule>
    <subcellularLocation>
        <location evidence="19">Host cytoplasmic vesicle membrane</location>
        <topology evidence="19">Peripheral membrane protein</topology>
        <orientation evidence="19">Cytoplasmic side</orientation>
    </subcellularLocation>
    <text evidence="19">Probably localizes to the surface of intracellular membrane vesicles that are induced after virus infection as the site for viral RNA replication. These vesicles are probably autophagosome-like vesicles.</text>
</comment>
<comment type="subcellular location">
    <molecule>Protein 2C</molecule>
    <subcellularLocation>
        <location evidence="19">Host cytoplasmic vesicle membrane</location>
        <topology evidence="19">Peripheral membrane protein</topology>
        <orientation evidence="19">Cytoplasmic side</orientation>
    </subcellularLocation>
    <text evidence="19">Probably localizes to the surface of intracellular membrane vesicles that are induced after virus infection as the site for viral RNA replication. These vesicles are probably autophagosome-like vesicles.</text>
</comment>
<comment type="subcellular location">
    <molecule>Protein 3A</molecule>
    <subcellularLocation>
        <location evidence="4">Host cytoplasmic vesicle membrane</location>
        <topology evidence="19">Peripheral membrane protein</topology>
        <orientation evidence="19">Cytoplasmic side</orientation>
    </subcellularLocation>
    <text evidence="4">Probably localizes to the surface of intracellular membrane vesicles that are induced after virus infection as the site for viral RNA replication. These vesicles are probably autophagosome-like vesicles.</text>
</comment>
<comment type="subcellular location">
    <molecule>VPg</molecule>
    <subcellularLocation>
        <location evidence="19">Virion</location>
    </subcellularLocation>
</comment>
<comment type="subcellular location">
    <molecule>Protease 3C</molecule>
    <subcellularLocation>
        <location evidence="19">Host cytoplasm</location>
    </subcellularLocation>
</comment>
<comment type="subcellular location">
    <molecule>RNA-directed RNA polymerase</molecule>
    <subcellularLocation>
        <location evidence="19">Host cytoplasmic vesicle membrane</location>
        <topology evidence="19">Peripheral membrane protein</topology>
        <orientation evidence="19">Cytoplasmic side</orientation>
    </subcellularLocation>
    <text evidence="19">Probably localizes to the surface of intracellular membrane vesicles that are induced after virus infection as the site for viral RNA replication. These vesicles are probably autophagosome-like vesicles.</text>
</comment>
<comment type="domain">
    <molecule>Leader protein</molecule>
    <text evidence="9">The Theilo and zinc-finger regions may both play a role in the inhibition of host nucleocytoplasmic trafficking and IRF-3 dimerization antagonism by the L protein.</text>
</comment>
<comment type="PTM">
    <molecule>Leader protein</molecule>
    <text evidence="11">Phosphorylated.</text>
</comment>
<comment type="PTM">
    <molecule>Genome polyprotein</molecule>
    <text evidence="4">Specific enzymatic cleavages by the viral protease in vivo yield a variety of precursors and mature proteins (By similarity). The polyprotein seems to be cotranslationally cleaved at the 2A/2B junction by a ribosomal skip from one codon to the next without formation of a peptide bond (By similarity). This process would release the P1-2A peptide from the translational complex (By similarity).</text>
</comment>
<comment type="PTM">
    <molecule>Capsid protein VP0</molecule>
    <text evidence="3">During virion maturation, immature virions are rendered infectious following cleavage of VP0 into VP4 and VP2. This maturation seems to be an autocatalytic event triggered by the presence of RNA in the capsid and is followed by a conformational change of the particle.</text>
</comment>
<comment type="PTM">
    <molecule>VPg</molecule>
    <text evidence="8">Uridylylated by the polymerase and is covalently linked to the 5'-end of genomic RNA. This uridylylated form acts as a nucleotide-peptide primer for the polymerase.</text>
</comment>
<comment type="PTM">
    <molecule>Capsid protein VP4</molecule>
    <text evidence="10">Myristoylation is required during RNA encapsidation and formation of the mature virus particle.</text>
</comment>
<comment type="miscellaneous">
    <text>Persistent strains of Theiler's virus (e.g. DA, TO, BeAn) cause persistent demyelinating disease whereas neurovirulent strains (such as GDVII) cause acute encephalitis.</text>
</comment>
<comment type="similarity">
    <text evidence="19">Belongs to the picornaviruses polyprotein family.</text>
</comment>
<comment type="online information" name="Virus Particle ExploreR db">
    <link uri="https://viperdb.org/Info_Page.php?VDB=1tmf"/>
    <text>Icosahedral capsid structure</text>
</comment>
<feature type="chain" id="PRO_0000446097" description="Genome polyprotein">
    <location>
        <begin position="1"/>
        <end position="2303"/>
    </location>
</feature>
<feature type="chain" id="PRO_0000040168" description="Leader protein">
    <location>
        <begin position="1"/>
        <end position="76"/>
    </location>
</feature>
<feature type="chain" id="PRO_0000310970" description="Capsid protein VP0">
    <location>
        <begin position="77"/>
        <end position="414"/>
    </location>
</feature>
<feature type="chain" id="PRO_0000040169" description="Capsid protein VP4">
    <location>
        <begin position="77"/>
        <end position="147"/>
    </location>
</feature>
<feature type="chain" id="PRO_0000040170" description="Capsid protein VP2">
    <location>
        <begin position="148"/>
        <end position="414"/>
    </location>
</feature>
<feature type="chain" id="PRO_0000040171" description="Capsid protein VP3">
    <location>
        <begin position="415"/>
        <end position="646"/>
    </location>
</feature>
<feature type="chain" id="PRO_0000040172" description="Capsid protein VP1">
    <location>
        <begin position="647"/>
        <end position="922"/>
    </location>
</feature>
<feature type="chain" id="PRO_0000040173" description="Protein 2A">
    <location>
        <begin position="923"/>
        <end position="1055"/>
    </location>
</feature>
<feature type="chain" id="PRO_0000040174" description="Protein 2B">
    <location>
        <begin position="1056"/>
        <end position="1191"/>
    </location>
</feature>
<feature type="chain" id="PRO_0000040175" description="Protein 2C">
    <location>
        <begin position="1192"/>
        <end position="1517"/>
    </location>
</feature>
<feature type="chain" id="PRO_0000040176" description="Protein 3A">
    <location>
        <begin position="1518"/>
        <end position="1605"/>
    </location>
</feature>
<feature type="chain" id="PRO_0000040177" description="VPg">
    <location>
        <begin position="1606"/>
        <end position="1625"/>
    </location>
</feature>
<feature type="chain" id="PRO_0000040178" description="Protease 3C">
    <location>
        <begin position="1626"/>
        <end position="1842"/>
    </location>
</feature>
<feature type="chain" id="PRO_0000040179" description="RNA-directed RNA polymerase">
    <location>
        <begin position="1843"/>
        <end position="2303"/>
    </location>
</feature>
<feature type="domain" description="SF3 helicase" evidence="14">
    <location>
        <begin position="1283"/>
        <end position="1448"/>
    </location>
</feature>
<feature type="domain" description="Peptidase C3" evidence="15">
    <location>
        <begin position="1636"/>
        <end position="1829"/>
    </location>
</feature>
<feature type="domain" description="RdRp catalytic" evidence="13">
    <location>
        <begin position="2071"/>
        <end position="2189"/>
    </location>
</feature>
<feature type="zinc finger region" evidence="8">
    <location>
        <begin position="3"/>
        <end position="14"/>
    </location>
</feature>
<feature type="region of interest" description="Acidic" evidence="19">
    <location>
        <begin position="30"/>
        <end position="46"/>
    </location>
</feature>
<feature type="region of interest" description="Theilo" evidence="9">
    <location>
        <begin position="60"/>
        <end position="73"/>
    </location>
</feature>
<feature type="region of interest" description="Disordered" evidence="16">
    <location>
        <begin position="74"/>
        <end position="93"/>
    </location>
</feature>
<feature type="region of interest" description="Host EIF4E binding" evidence="11">
    <location>
        <begin position="1041"/>
        <end position="1047"/>
    </location>
</feature>
<feature type="compositionally biased region" description="Low complexity" evidence="16">
    <location>
        <begin position="78"/>
        <end position="92"/>
    </location>
</feature>
<feature type="active site" description="For protease 3C activity" evidence="15">
    <location>
        <position position="1680"/>
    </location>
</feature>
<feature type="active site" description="For protease 3C activity" evidence="15">
    <location>
        <position position="1714"/>
    </location>
</feature>
<feature type="active site" description="For protease 3C activity" evidence="15">
    <location>
        <position position="1793"/>
    </location>
</feature>
<feature type="active site" description="For RdRp activity" evidence="8">
    <location>
        <position position="2077"/>
    </location>
</feature>
<feature type="active site" description="For RdRp activity" evidence="8">
    <location>
        <position position="2175"/>
    </location>
</feature>
<feature type="binding site" evidence="14">
    <location>
        <begin position="1312"/>
        <end position="1319"/>
    </location>
    <ligand>
        <name>ATP</name>
        <dbReference type="ChEBI" id="CHEBI:30616"/>
    </ligand>
</feature>
<feature type="site" description="Cleavage" evidence="12">
    <location>
        <begin position="147"/>
        <end position="148"/>
    </location>
</feature>
<feature type="site" description="Cleavage; by protease 3C" evidence="4">
    <location>
        <begin position="414"/>
        <end position="415"/>
    </location>
</feature>
<feature type="site" description="Cleavage; by protease 3C" evidence="4">
    <location>
        <begin position="646"/>
        <end position="647"/>
    </location>
</feature>
<feature type="site" description="Cleavage; by protease 3C" evidence="4">
    <location>
        <begin position="922"/>
        <end position="923"/>
    </location>
</feature>
<feature type="site" description="Cleavage; by ribosomal skip" evidence="4">
    <location>
        <begin position="1055"/>
        <end position="1056"/>
    </location>
</feature>
<feature type="site" description="Cleavage; by protease 3C" evidence="4">
    <location>
        <begin position="1191"/>
        <end position="1192"/>
    </location>
</feature>
<feature type="site" description="Cleavage; by protease 3C" evidence="4">
    <location>
        <begin position="1517"/>
        <end position="1518"/>
    </location>
</feature>
<feature type="site" description="Cleavage; by protease 3C" evidence="4">
    <location>
        <begin position="1605"/>
        <end position="1606"/>
    </location>
</feature>
<feature type="site" description="Cleavage; by protease 3C" evidence="4">
    <location>
        <begin position="1625"/>
        <end position="1626"/>
    </location>
</feature>
<feature type="site" description="Cleavage; by protease 3C" evidence="4">
    <location>
        <begin position="1842"/>
        <end position="1843"/>
    </location>
</feature>
<feature type="modified residue" description="O-(5'-phospho-RNA)-tyrosine" evidence="3">
    <location>
        <position position="1608"/>
    </location>
</feature>
<feature type="lipid moiety-binding region" description="N-myristoyl glycine; by host" evidence="10">
    <location>
        <position position="77"/>
    </location>
</feature>
<feature type="disulfide bond" evidence="2">
    <location>
        <begin position="501"/>
        <end position="503"/>
    </location>
</feature>
<feature type="helix" evidence="21">
    <location>
        <begin position="158"/>
        <end position="160"/>
    </location>
</feature>
<feature type="strand" evidence="21">
    <location>
        <begin position="162"/>
        <end position="166"/>
    </location>
</feature>
<feature type="strand" evidence="21">
    <location>
        <begin position="169"/>
        <end position="175"/>
    </location>
</feature>
<feature type="strand" evidence="21">
    <location>
        <begin position="180"/>
        <end position="184"/>
    </location>
</feature>
<feature type="helix" evidence="21">
    <location>
        <begin position="204"/>
        <end position="206"/>
    </location>
</feature>
<feature type="strand" evidence="21">
    <location>
        <begin position="210"/>
        <end position="217"/>
    </location>
</feature>
<feature type="strand" evidence="21">
    <location>
        <begin position="228"/>
        <end position="232"/>
    </location>
</feature>
<feature type="strand" evidence="21">
    <location>
        <begin position="235"/>
        <end position="238"/>
    </location>
</feature>
<feature type="helix" evidence="21">
    <location>
        <begin position="241"/>
        <end position="247"/>
    </location>
</feature>
<feature type="strand" evidence="21">
    <location>
        <begin position="248"/>
        <end position="253"/>
    </location>
</feature>
<feature type="strand" evidence="21">
    <location>
        <begin position="256"/>
        <end position="262"/>
    </location>
</feature>
<feature type="strand" evidence="21">
    <location>
        <begin position="272"/>
        <end position="280"/>
    </location>
</feature>
<feature type="strand" evidence="21">
    <location>
        <begin position="289"/>
        <end position="293"/>
    </location>
</feature>
<feature type="turn" evidence="21">
    <location>
        <begin position="330"/>
        <end position="334"/>
    </location>
</feature>
<feature type="strand" evidence="21">
    <location>
        <begin position="335"/>
        <end position="341"/>
    </location>
</feature>
<feature type="turn" evidence="21">
    <location>
        <begin position="343"/>
        <end position="345"/>
    </location>
</feature>
<feature type="strand" evidence="21">
    <location>
        <begin position="347"/>
        <end position="353"/>
    </location>
</feature>
<feature type="strand" evidence="21">
    <location>
        <begin position="357"/>
        <end position="363"/>
    </location>
</feature>
<feature type="turn" evidence="21">
    <location>
        <begin position="364"/>
        <end position="366"/>
    </location>
</feature>
<feature type="strand" evidence="21">
    <location>
        <begin position="369"/>
        <end position="378"/>
    </location>
</feature>
<feature type="strand" evidence="21">
    <location>
        <begin position="390"/>
        <end position="400"/>
    </location>
</feature>
<feature type="strand" evidence="21">
    <location>
        <begin position="403"/>
        <end position="406"/>
    </location>
</feature>
<feature type="turn" evidence="21">
    <location>
        <begin position="459"/>
        <end position="463"/>
    </location>
</feature>
<feature type="strand" evidence="21">
    <location>
        <begin position="473"/>
        <end position="475"/>
    </location>
</feature>
<feature type="strand" evidence="21">
    <location>
        <begin position="492"/>
        <end position="495"/>
    </location>
</feature>
<feature type="strand" evidence="21">
    <location>
        <begin position="501"/>
        <end position="504"/>
    </location>
</feature>
<feature type="helix" evidence="21">
    <location>
        <begin position="508"/>
        <end position="511"/>
    </location>
</feature>
<feature type="strand" evidence="21">
    <location>
        <begin position="515"/>
        <end position="521"/>
    </location>
</feature>
<feature type="strand" evidence="21">
    <location>
        <begin position="524"/>
        <end position="529"/>
    </location>
</feature>
<feature type="strand" evidence="21">
    <location>
        <begin position="536"/>
        <end position="543"/>
    </location>
</feature>
<feature type="strand" evidence="21">
    <location>
        <begin position="546"/>
        <end position="548"/>
    </location>
</feature>
<feature type="helix" evidence="21">
    <location>
        <begin position="554"/>
        <end position="557"/>
    </location>
</feature>
<feature type="strand" evidence="21">
    <location>
        <begin position="560"/>
        <end position="562"/>
    </location>
</feature>
<feature type="strand" evidence="21">
    <location>
        <begin position="568"/>
        <end position="570"/>
    </location>
</feature>
<feature type="strand" evidence="21">
    <location>
        <begin position="572"/>
        <end position="575"/>
    </location>
</feature>
<feature type="strand" evidence="21">
    <location>
        <begin position="582"/>
        <end position="587"/>
    </location>
</feature>
<feature type="strand" evidence="21">
    <location>
        <begin position="602"/>
        <end position="611"/>
    </location>
</feature>
<feature type="strand" evidence="21">
    <location>
        <begin position="622"/>
        <end position="627"/>
    </location>
</feature>
<feature type="strand" evidence="21">
    <location>
        <begin position="633"/>
        <end position="636"/>
    </location>
</feature>
<feature type="strand" evidence="21">
    <location>
        <begin position="661"/>
        <end position="666"/>
    </location>
</feature>
<feature type="turn" evidence="21">
    <location>
        <begin position="680"/>
        <end position="684"/>
    </location>
</feature>
<feature type="strand" evidence="21">
    <location>
        <begin position="698"/>
        <end position="700"/>
    </location>
</feature>
<feature type="strand" evidence="21">
    <location>
        <begin position="712"/>
        <end position="714"/>
    </location>
</feature>
<feature type="strand" evidence="21">
    <location>
        <begin position="717"/>
        <end position="719"/>
    </location>
</feature>
<feature type="strand" evidence="21">
    <location>
        <begin position="727"/>
        <end position="729"/>
    </location>
</feature>
<feature type="strand" evidence="21">
    <location>
        <begin position="732"/>
        <end position="734"/>
    </location>
</feature>
<feature type="strand" evidence="21">
    <location>
        <begin position="747"/>
        <end position="749"/>
    </location>
</feature>
<feature type="strand" evidence="21">
    <location>
        <begin position="751"/>
        <end position="753"/>
    </location>
</feature>
<feature type="turn" evidence="21">
    <location>
        <begin position="760"/>
        <end position="764"/>
    </location>
</feature>
<feature type="strand" evidence="21">
    <location>
        <begin position="769"/>
        <end position="780"/>
    </location>
</feature>
<feature type="strand" evidence="21">
    <location>
        <begin position="791"/>
        <end position="794"/>
    </location>
</feature>
<feature type="strand" evidence="21">
    <location>
        <begin position="807"/>
        <end position="809"/>
    </location>
</feature>
<feature type="strand" evidence="21">
    <location>
        <begin position="820"/>
        <end position="822"/>
    </location>
</feature>
<feature type="strand" evidence="21">
    <location>
        <begin position="831"/>
        <end position="835"/>
    </location>
</feature>
<feature type="strand" evidence="21">
    <location>
        <begin position="842"/>
        <end position="847"/>
    </location>
</feature>
<feature type="strand" evidence="21">
    <location>
        <begin position="853"/>
        <end position="856"/>
    </location>
</feature>
<feature type="strand" evidence="21">
    <location>
        <begin position="861"/>
        <end position="863"/>
    </location>
</feature>
<feature type="strand" evidence="21">
    <location>
        <begin position="871"/>
        <end position="874"/>
    </location>
</feature>
<feature type="strand" evidence="21">
    <location>
        <begin position="880"/>
        <end position="893"/>
    </location>
</feature>
<accession>P08544</accession>
<accession>Q88583</accession>
<accession>Q88584</accession>
<accession>Q88585</accession>
<accession>Q88586</accession>
<accession>Q88587</accession>
<accession>Q88588</accession>
<accession>Q88589</accession>
<accession>Q88590</accession>
<accession>Q88591</accession>
<accession>Q88592</accession>
<organismHost>
    <name type="scientific">Mus musculus</name>
    <name type="common">Mouse</name>
    <dbReference type="NCBI Taxonomy" id="10090"/>
</organismHost>
<dbReference type="EC" id="3.6.4.13"/>
<dbReference type="EC" id="3.4.22.28" evidence="8"/>
<dbReference type="EC" id="2.7.7.48" evidence="13"/>
<dbReference type="EMBL" id="M16020">
    <property type="protein sequence ID" value="AAA47930.1"/>
    <property type="molecule type" value="Genomic_RNA"/>
</dbReference>
<dbReference type="PIR" id="A29535">
    <property type="entry name" value="GNNYTM"/>
</dbReference>
<dbReference type="PDB" id="1TMF">
    <property type="method" value="X-ray"/>
    <property type="resolution" value="3.50 A"/>
    <property type="chains" value="1=647-922, 2=148-414, 3=415-646"/>
</dbReference>
<dbReference type="PDBsum" id="1TMF"/>
<dbReference type="SMR" id="P08544"/>
<dbReference type="MEROPS" id="C03.010"/>
<dbReference type="EvolutionaryTrace" id="P08544"/>
<dbReference type="Proteomes" id="UP000007538">
    <property type="component" value="Segment"/>
</dbReference>
<dbReference type="GO" id="GO:0044162">
    <property type="term" value="C:host cell cytoplasmic vesicle membrane"/>
    <property type="evidence" value="ECO:0007669"/>
    <property type="project" value="UniProtKB-SubCell"/>
</dbReference>
<dbReference type="GO" id="GO:0044196">
    <property type="term" value="C:host cell nucleolus"/>
    <property type="evidence" value="ECO:0007669"/>
    <property type="project" value="UniProtKB-SubCell"/>
</dbReference>
<dbReference type="GO" id="GO:0016020">
    <property type="term" value="C:membrane"/>
    <property type="evidence" value="ECO:0007669"/>
    <property type="project" value="UniProtKB-KW"/>
</dbReference>
<dbReference type="GO" id="GO:0039618">
    <property type="term" value="C:T=pseudo3 icosahedral viral capsid"/>
    <property type="evidence" value="ECO:0007669"/>
    <property type="project" value="UniProtKB-KW"/>
</dbReference>
<dbReference type="GO" id="GO:0005524">
    <property type="term" value="F:ATP binding"/>
    <property type="evidence" value="ECO:0007669"/>
    <property type="project" value="UniProtKB-KW"/>
</dbReference>
<dbReference type="GO" id="GO:0016887">
    <property type="term" value="F:ATP hydrolysis activity"/>
    <property type="evidence" value="ECO:0007669"/>
    <property type="project" value="RHEA"/>
</dbReference>
<dbReference type="GO" id="GO:0015267">
    <property type="term" value="F:channel activity"/>
    <property type="evidence" value="ECO:0007669"/>
    <property type="project" value="UniProtKB-KW"/>
</dbReference>
<dbReference type="GO" id="GO:0004197">
    <property type="term" value="F:cysteine-type endopeptidase activity"/>
    <property type="evidence" value="ECO:0007669"/>
    <property type="project" value="UniProtKB-EC"/>
</dbReference>
<dbReference type="GO" id="GO:0030291">
    <property type="term" value="F:protein serine/threonine kinase inhibitor activity"/>
    <property type="evidence" value="ECO:0007669"/>
    <property type="project" value="UniProtKB-KW"/>
</dbReference>
<dbReference type="GO" id="GO:0003723">
    <property type="term" value="F:RNA binding"/>
    <property type="evidence" value="ECO:0007669"/>
    <property type="project" value="UniProtKB-KW"/>
</dbReference>
<dbReference type="GO" id="GO:0003724">
    <property type="term" value="F:RNA helicase activity"/>
    <property type="evidence" value="ECO:0007669"/>
    <property type="project" value="UniProtKB-EC"/>
</dbReference>
<dbReference type="GO" id="GO:0003968">
    <property type="term" value="F:RNA-directed RNA polymerase activity"/>
    <property type="evidence" value="ECO:0007669"/>
    <property type="project" value="UniProtKB-KW"/>
</dbReference>
<dbReference type="GO" id="GO:0005198">
    <property type="term" value="F:structural molecule activity"/>
    <property type="evidence" value="ECO:0007669"/>
    <property type="project" value="InterPro"/>
</dbReference>
<dbReference type="GO" id="GO:0008270">
    <property type="term" value="F:zinc ion binding"/>
    <property type="evidence" value="ECO:0007669"/>
    <property type="project" value="UniProtKB-KW"/>
</dbReference>
<dbReference type="GO" id="GO:0006351">
    <property type="term" value="P:DNA-templated transcription"/>
    <property type="evidence" value="ECO:0007669"/>
    <property type="project" value="InterPro"/>
</dbReference>
<dbReference type="GO" id="GO:0034220">
    <property type="term" value="P:monoatomic ion transmembrane transport"/>
    <property type="evidence" value="ECO:0007669"/>
    <property type="project" value="UniProtKB-KW"/>
</dbReference>
<dbReference type="GO" id="GO:0006508">
    <property type="term" value="P:proteolysis"/>
    <property type="evidence" value="ECO:0007669"/>
    <property type="project" value="UniProtKB-KW"/>
</dbReference>
<dbReference type="GO" id="GO:0046718">
    <property type="term" value="P:symbiont entry into host cell"/>
    <property type="evidence" value="ECO:0007669"/>
    <property type="project" value="UniProtKB-KW"/>
</dbReference>
<dbReference type="GO" id="GO:0039520">
    <property type="term" value="P:symbiont-mediated activation of host autophagy"/>
    <property type="evidence" value="ECO:0000250"/>
    <property type="project" value="UniProtKB"/>
</dbReference>
<dbReference type="GO" id="GO:0039548">
    <property type="term" value="P:symbiont-mediated suppression of host cytoplasmic pattern recognition receptor signaling pathway via inhibition of IRF3 activity"/>
    <property type="evidence" value="ECO:0007669"/>
    <property type="project" value="UniProtKB-KW"/>
</dbReference>
<dbReference type="GO" id="GO:0039657">
    <property type="term" value="P:symbiont-mediated suppression of host gene expression"/>
    <property type="evidence" value="ECO:0007669"/>
    <property type="project" value="UniProtKB-KW"/>
</dbReference>
<dbReference type="GO" id="GO:0039580">
    <property type="term" value="P:symbiont-mediated suppression of host PKR/eIFalpha signaling"/>
    <property type="evidence" value="ECO:0007669"/>
    <property type="project" value="UniProtKB-KW"/>
</dbReference>
<dbReference type="GO" id="GO:0039502">
    <property type="term" value="P:symbiont-mediated suppression of host type I interferon-mediated signaling pathway"/>
    <property type="evidence" value="ECO:0007669"/>
    <property type="project" value="UniProtKB-KW"/>
</dbReference>
<dbReference type="GO" id="GO:0039694">
    <property type="term" value="P:viral RNA genome replication"/>
    <property type="evidence" value="ECO:0007669"/>
    <property type="project" value="InterPro"/>
</dbReference>
<dbReference type="GO" id="GO:0019062">
    <property type="term" value="P:virion attachment to host cell"/>
    <property type="evidence" value="ECO:0007669"/>
    <property type="project" value="UniProtKB-KW"/>
</dbReference>
<dbReference type="CDD" id="cd23211">
    <property type="entry name" value="Cardiovirus_RdRp"/>
    <property type="match status" value="1"/>
</dbReference>
<dbReference type="CDD" id="cd00205">
    <property type="entry name" value="rhv_like"/>
    <property type="match status" value="3"/>
</dbReference>
<dbReference type="FunFam" id="2.40.10.10:FF:000145">
    <property type="entry name" value="Genome polyprotein"/>
    <property type="match status" value="1"/>
</dbReference>
<dbReference type="FunFam" id="2.60.120.20:FF:000009">
    <property type="entry name" value="Genome polyprotein"/>
    <property type="match status" value="1"/>
</dbReference>
<dbReference type="FunFam" id="2.60.120.20:FF:000011">
    <property type="entry name" value="Genome polyprotein"/>
    <property type="match status" value="1"/>
</dbReference>
<dbReference type="FunFam" id="2.60.120.20:FF:000013">
    <property type="entry name" value="Genome polyprotein"/>
    <property type="match status" value="1"/>
</dbReference>
<dbReference type="FunFam" id="3.30.70.270:FF:000046">
    <property type="entry name" value="Genome polyprotein"/>
    <property type="match status" value="1"/>
</dbReference>
<dbReference type="FunFam" id="3.30.70.270:FF:000065">
    <property type="entry name" value="Genome polyprotein"/>
    <property type="match status" value="1"/>
</dbReference>
<dbReference type="FunFam" id="4.10.90.10:FF:000002">
    <property type="entry name" value="Genome polyprotein"/>
    <property type="match status" value="1"/>
</dbReference>
<dbReference type="Gene3D" id="1.20.960.20">
    <property type="match status" value="1"/>
</dbReference>
<dbReference type="Gene3D" id="2.60.120.20">
    <property type="match status" value="3"/>
</dbReference>
<dbReference type="Gene3D" id="3.30.70.270">
    <property type="match status" value="2"/>
</dbReference>
<dbReference type="Gene3D" id="4.10.90.10">
    <property type="entry name" value="Capsid protein VP4 superfamily, Picornavirus"/>
    <property type="match status" value="1"/>
</dbReference>
<dbReference type="Gene3D" id="2.40.10.10">
    <property type="entry name" value="Trypsin-like serine proteases"/>
    <property type="match status" value="1"/>
</dbReference>
<dbReference type="InterPro" id="IPR015031">
    <property type="entry name" value="Capsid_VP4_Picornavir"/>
</dbReference>
<dbReference type="InterPro" id="IPR037080">
    <property type="entry name" value="Capsid_VP4_sf_Picornavirus"/>
</dbReference>
<dbReference type="InterPro" id="IPR043502">
    <property type="entry name" value="DNA/RNA_pol_sf"/>
</dbReference>
<dbReference type="InterPro" id="IPR004004">
    <property type="entry name" value="Helic/Pol/Pept_Calicivir-typ"/>
</dbReference>
<dbReference type="InterPro" id="IPR000605">
    <property type="entry name" value="Helicase_SF3_ssDNA/RNA_vir"/>
</dbReference>
<dbReference type="InterPro" id="IPR014759">
    <property type="entry name" value="Helicase_SF3_ssRNA_vir"/>
</dbReference>
<dbReference type="InterPro" id="IPR044067">
    <property type="entry name" value="PCV_3C_PRO"/>
</dbReference>
<dbReference type="InterPro" id="IPR000199">
    <property type="entry name" value="Peptidase_C3A/C3B_picornavir"/>
</dbReference>
<dbReference type="InterPro" id="IPR009003">
    <property type="entry name" value="Peptidase_S1_PA"/>
</dbReference>
<dbReference type="InterPro" id="IPR043504">
    <property type="entry name" value="Peptidase_S1_PA_chymotrypsin"/>
</dbReference>
<dbReference type="InterPro" id="IPR001676">
    <property type="entry name" value="Picornavirus_capsid"/>
</dbReference>
<dbReference type="InterPro" id="IPR043128">
    <property type="entry name" value="Rev_trsase/Diguanyl_cyclase"/>
</dbReference>
<dbReference type="InterPro" id="IPR033703">
    <property type="entry name" value="Rhv-like"/>
</dbReference>
<dbReference type="InterPro" id="IPR001205">
    <property type="entry name" value="RNA-dir_pol_C"/>
</dbReference>
<dbReference type="InterPro" id="IPR007094">
    <property type="entry name" value="RNA-dir_pol_PSvirus"/>
</dbReference>
<dbReference type="InterPro" id="IPR029053">
    <property type="entry name" value="Viral_coat"/>
</dbReference>
<dbReference type="Pfam" id="PF00548">
    <property type="entry name" value="Peptidase_C3"/>
    <property type="match status" value="1"/>
</dbReference>
<dbReference type="Pfam" id="PF00680">
    <property type="entry name" value="RdRP_1"/>
    <property type="match status" value="1"/>
</dbReference>
<dbReference type="Pfam" id="PF00073">
    <property type="entry name" value="Rhv"/>
    <property type="match status" value="2"/>
</dbReference>
<dbReference type="Pfam" id="PF22663">
    <property type="entry name" value="Rhv_5"/>
    <property type="match status" value="1"/>
</dbReference>
<dbReference type="Pfam" id="PF00910">
    <property type="entry name" value="RNA_helicase"/>
    <property type="match status" value="1"/>
</dbReference>
<dbReference type="Pfam" id="PF08935">
    <property type="entry name" value="VP4_2"/>
    <property type="match status" value="1"/>
</dbReference>
<dbReference type="PRINTS" id="PR00918">
    <property type="entry name" value="CALICVIRUSNS"/>
</dbReference>
<dbReference type="SUPFAM" id="SSF56672">
    <property type="entry name" value="DNA/RNA polymerases"/>
    <property type="match status" value="1"/>
</dbReference>
<dbReference type="SUPFAM" id="SSF88633">
    <property type="entry name" value="Positive stranded ssRNA viruses"/>
    <property type="match status" value="2"/>
</dbReference>
<dbReference type="SUPFAM" id="SSF50494">
    <property type="entry name" value="Trypsin-like serine proteases"/>
    <property type="match status" value="1"/>
</dbReference>
<dbReference type="PROSITE" id="PS51874">
    <property type="entry name" value="PCV_3C_PRO"/>
    <property type="match status" value="1"/>
</dbReference>
<dbReference type="PROSITE" id="PS50507">
    <property type="entry name" value="RDRP_SSRNA_POS"/>
    <property type="match status" value="1"/>
</dbReference>
<dbReference type="PROSITE" id="PS51218">
    <property type="entry name" value="SF3_HELICASE_2"/>
    <property type="match status" value="1"/>
</dbReference>
<organism>
    <name type="scientific">Theiler's murine encephalomyelitis virus (strain BeAn 8386)</name>
    <name type="common">TMEV</name>
    <dbReference type="NCBI Taxonomy" id="12125"/>
    <lineage>
        <taxon>Viruses</taxon>
        <taxon>Riboviria</taxon>
        <taxon>Orthornavirae</taxon>
        <taxon>Pisuviricota</taxon>
        <taxon>Pisoniviricetes</taxon>
        <taxon>Picornavirales</taxon>
        <taxon>Picornaviridae</taxon>
        <taxon>Caphthovirinae</taxon>
        <taxon>Cardiovirus</taxon>
        <taxon>Cardiovirus B</taxon>
    </lineage>
</organism>
<sequence length="2303" mass="256282">MACKHGYPDVCPICTAVDATPGFEYLLMADGEWYPTDLLCVDLDDDVFWPSDTSNQSQTMDWTDVPLIRDIVMEPQGNSSSSDKSNSQSSGNEGVIINNFYSNQYQNSIDLSASGGNAGDAPQTNGQLSNILGGAANAFATMAPLLLDQNTEEMENLSDRVASDKAGNSATNTQSTVGRLCGYGKSHHGEHPASCADTATDKVLAAERYYTIDLASWTTSQEAFSHIRIPLPHVLAGEDGGVFGATLRRHYLCKTGWRVQVQCNASQFHAGSLLVFMAPEFYTGKGTKTGTMEPSDPFTMDTEWRSPQGAPTGYRYDSRTGFFATNHQNQWQWTVYPHQILNLRTNTTVDLEVPYVNVAPSSSWTQHANWTLVVAVLSPLQYATGSSPDVQITASLQPVNPVFNGLRHETVIAQSPIPVTVREHKGCFYSTNPDTTVPIYGKTISTPSDYMCGEFSDLLELCKLPTFLGNPNTNNKRYPYFSATNSVPATSMVDYQVALSCSCMANSMLAAVARNFNQYRGSLNFLFVFTGAAMVKGKFLIAYTPPGAGKPTTRDQAMQSTYAIWDLGLNSSFNFTAPFISPTHYRQTSYTSPTITSVDGWVTVWKLTPLTYPSGTPTNSDILTLVSAGDDFTLRMPISPTKWVPQGVDNAEKGKVSNDDASVDFVAEPVKLPENQTRVAFFYDRAVPIGMLRPGQNMETTFNYQENDYRLNCLLLTPLPSFCPDSSSGPQKTKAPVQWRWVRSGGVNGANFPLMTKQDYAFLCFSPFTFYKCDLEVTVSALGMTRVASVLRWAPTGAPADVTDQLIGYTPSLGETRNPHMWLVGAGNSQVSFVVPYNSPLSVLPAAWFNGWSDFGNTKDFGVAPNADFGRLWIQGNTSASVRIRYKKMKVFCPRPTLFFPWPTPTTTKINADNPVPILELENPAALYRIDLFITFTDEFITFDYKVHGRPVLTFRIPGFGLTPAGRMLVCMGEQPAHGPFTSSRSLYHVIFTATCSSFSFSIYKGRYRSWKKPIHDELVDRGYTTFGEFFKAVRGYHADYYRQRLIHDVETNPGPVQSVFQPQGAVLTKSLAPQAGIQNLLLRLLGIDGDCSEVSKAITVVTDLVAAWEKAKTTLVSPEFWSKLILKTTKFIAASVLYLHNPDFTTTVCLSLMTGVDLLTNDSVFDWLKQKLSSFFRTPPPACPNVMQPQGPLREANEGFTFAKNIEWAMKTIQSVVNWLTSWFKQEEDHPQSKLDKLLMEFPDHCRNIMDMRNGRKAYCECTASFKYFDELYNLAVTCKRIPLASLCEKFKNRHDHSVTRPEPVVVVLRGAAGQGKSVTSQIIAQSVSKMAFGRQSVYSMPPDSEYFDGYENQFSVIMDDLGQNPDGEDFTVFCQMVSSTNFLPNMAHLERKGTPFTSSFIVATTNLPKFRPVTVAHYPAVDRRITFDFTVTAGPHCKTPAGMLDVEKAFDEIPGSKPQLACFSADCPLLHKRGVMFTCNRTQTVYNLQQVVKMVNDTITRKTENVKKMNSLVAQSPPDWEHFENILTCLRQNNAALQDQLDELQEAFAQARERSDFLSDWLKVSAIIFAGIASLSAVIKLASKFKESIWPTPVRVELSEGEQAAYAGRARAQKQALQVLDIQGGGKVLAQAGNPVMDFELFCAKNIVAPITFYYPDKAEVTQSCLLLRAHLFVVNRHVAETDWTAFKLKDVRHERHTVALRSVNRSGAKTDLTFIKVTKGPLFKDNVNKFCSNKDDFPARNDTVTGIMNTGLAFVYSGNFLIGNQPVNTTTGACFNHCLHYRAQTRRGWCGSAIICNVNGKKAVYGMHSAGGGGLAAATIITKELIEAAEKSMLALEPQGAIVDIATGSVVHVPRKTKLRRTVAHDVFQPKFEPAVLSRYDPRTDKDVDVVAFSKHTTNMESLPPIFDVVCGEYANRVFTILGKENGLLTVEQAVLGLPGMDPMEKDTSPGLPYTQQGLRRTDLLNFITAKMTPQLDYAHSKLVIGVYDDVVYQSFLKDEIRPIEKIHEAKTRIVDVPPFAHCIWGRQLLGRFASKFQTKPGLELGSAIGTDPDVDWTRYAVELSGFNYVYDVDYSNFDASHSTAMFECLINNFFTEQNGFDRRIAEYLRSLAVSRHAYEDRRVLIRGGLPSGCAATSMLNTIMNNVIIRAALYLTYSNFDFDDIKVLSYGDDLLIGTNYQIDFNLVKERLAPFGYKITPANKTTTFPLTSHLQDVTFLKRRFVRFNSYLFRPQMDAVNLKAMVSYCKPGTLKEKLMSIALLAVHSGPDIYDEIFLPFRNVGIVVPTYSSMLYRWLSLFR</sequence>
<name>POLG_TMEVB</name>
<protein>
    <recommendedName>
        <fullName>Genome polyprotein</fullName>
    </recommendedName>
    <component>
        <recommendedName>
            <fullName>Leader protein</fullName>
            <shortName>L</shortName>
        </recommendedName>
    </component>
    <component>
        <recommendedName>
            <fullName>Capsid protein VP0</fullName>
        </recommendedName>
        <alternativeName>
            <fullName>VP4-VP2</fullName>
        </alternativeName>
    </component>
    <component>
        <recommendedName>
            <fullName>Capsid protein VP4</fullName>
        </recommendedName>
        <alternativeName>
            <fullName>P1A</fullName>
        </alternativeName>
        <alternativeName>
            <fullName>Virion protein 4</fullName>
        </alternativeName>
    </component>
    <component>
        <recommendedName>
            <fullName>Capsid protein VP2</fullName>
        </recommendedName>
        <alternativeName>
            <fullName>P1B</fullName>
        </alternativeName>
        <alternativeName>
            <fullName>Virion protein 2</fullName>
        </alternativeName>
    </component>
    <component>
        <recommendedName>
            <fullName>Capsid protein VP3</fullName>
        </recommendedName>
        <alternativeName>
            <fullName>P1C</fullName>
        </alternativeName>
        <alternativeName>
            <fullName>Virion protein 3</fullName>
        </alternativeName>
    </component>
    <component>
        <recommendedName>
            <fullName>Capsid protein VP1</fullName>
        </recommendedName>
        <alternativeName>
            <fullName>P1D</fullName>
        </alternativeName>
        <alternativeName>
            <fullName>Virion protein 1</fullName>
        </alternativeName>
    </component>
    <component>
        <recommendedName>
            <fullName>Protein 2A</fullName>
            <shortName>P2A</shortName>
        </recommendedName>
    </component>
    <component>
        <recommendedName>
            <fullName>Protein 2B</fullName>
            <shortName>P2B</shortName>
        </recommendedName>
    </component>
    <component>
        <recommendedName>
            <fullName>Protein 2C</fullName>
            <shortName>P2C</shortName>
            <ecNumber>3.6.4.13</ecNumber>
        </recommendedName>
    </component>
    <component>
        <recommendedName>
            <fullName>Protein 3A</fullName>
            <shortName>P3A</shortName>
        </recommendedName>
    </component>
    <component>
        <recommendedName>
            <fullName>VPg</fullName>
            <shortName>P3B</shortName>
        </recommendedName>
        <alternativeName>
            <fullName>Protein 3B</fullName>
        </alternativeName>
    </component>
    <component>
        <recommendedName>
            <fullName>Protease 3C</fullName>
            <shortName>P3C</shortName>
            <ecNumber evidence="8">3.4.22.28</ecNumber>
        </recommendedName>
        <alternativeName>
            <fullName>Picornain 3C</fullName>
        </alternativeName>
    </component>
    <component>
        <recommendedName>
            <fullName>RNA-directed RNA polymerase</fullName>
            <shortName>RdRp</shortName>
            <ecNumber evidence="13">2.7.7.48</ecNumber>
        </recommendedName>
        <alternativeName>
            <fullName>3D polymerase</fullName>
            <shortName>3Dpol</shortName>
        </alternativeName>
        <alternativeName>
            <fullName>Protein 3D</fullName>
            <shortName>3D</shortName>
        </alternativeName>
    </component>
</protein>
<keyword id="KW-0002">3D-structure</keyword>
<keyword id="KW-0067">ATP-binding</keyword>
<keyword id="KW-0167">Capsid protein</keyword>
<keyword id="KW-0191">Covalent protein-RNA linkage</keyword>
<keyword id="KW-1015">Disulfide bond</keyword>
<keyword id="KW-1262">Eukaryotic host gene expression shutoff by virus</keyword>
<keyword id="KW-1193">Eukaryotic host translation shutoff by virus</keyword>
<keyword id="KW-0347">Helicase</keyword>
<keyword id="KW-1035">Host cytoplasm</keyword>
<keyword id="KW-1036">Host cytoplasmic vesicle</keyword>
<keyword id="KW-1190">Host gene expression shutoff by virus</keyword>
<keyword id="KW-1043">Host membrane</keyword>
<keyword id="KW-1048">Host nucleus</keyword>
<keyword id="KW-0945">Host-virus interaction</keyword>
<keyword id="KW-0378">Hydrolase</keyword>
<keyword id="KW-1090">Inhibition of host innate immune response by virus</keyword>
<keyword id="KW-1114">Inhibition of host interferon signaling pathway by virus</keyword>
<keyword id="KW-1092">Inhibition of host IRF3 by virus</keyword>
<keyword id="KW-1102">Inhibition of host PKR by virus</keyword>
<keyword id="KW-1113">Inhibition of host RLR pathway by virus</keyword>
<keyword id="KW-0922">Interferon antiviral system evasion</keyword>
<keyword id="KW-0407">Ion channel</keyword>
<keyword id="KW-0406">Ion transport</keyword>
<keyword id="KW-0449">Lipoprotein</keyword>
<keyword id="KW-0472">Membrane</keyword>
<keyword id="KW-0479">Metal-binding</keyword>
<keyword id="KW-0519">Myristate</keyword>
<keyword id="KW-0547">Nucleotide-binding</keyword>
<keyword id="KW-0548">Nucleotidyltransferase</keyword>
<keyword id="KW-0597">Phosphoprotein</keyword>
<keyword id="KW-0645">Protease</keyword>
<keyword id="KW-0694">RNA-binding</keyword>
<keyword id="KW-0696">RNA-directed RNA polymerase</keyword>
<keyword id="KW-1143">T=pseudo3 icosahedral capsid protein</keyword>
<keyword id="KW-0788">Thiol protease</keyword>
<keyword id="KW-0808">Transferase</keyword>
<keyword id="KW-0813">Transport</keyword>
<keyword id="KW-1161">Viral attachment to host cell</keyword>
<keyword id="KW-0899">Viral immunoevasion</keyword>
<keyword id="KW-1182">Viral ion channel</keyword>
<keyword id="KW-0693">Viral RNA replication</keyword>
<keyword id="KW-0946">Virion</keyword>
<keyword id="KW-1160">Virus entry into host cell</keyword>
<keyword id="KW-0862">Zinc</keyword>
<keyword id="KW-0863">Zinc-finger</keyword>
<proteinExistence type="evidence at protein level"/>
<evidence type="ECO:0000250" key="1"/>
<evidence type="ECO:0000250" key="2">
    <source>
        <dbReference type="UniProtKB" id="C0MHL9"/>
    </source>
</evidence>
<evidence type="ECO:0000250" key="3">
    <source>
        <dbReference type="UniProtKB" id="P03300"/>
    </source>
</evidence>
<evidence type="ECO:0000250" key="4">
    <source>
        <dbReference type="UniProtKB" id="P03304"/>
    </source>
</evidence>
<evidence type="ECO:0000250" key="5">
    <source>
        <dbReference type="UniProtKB" id="P03305"/>
    </source>
</evidence>
<evidence type="ECO:0000250" key="6">
    <source>
        <dbReference type="UniProtKB" id="P08545"/>
    </source>
</evidence>
<evidence type="ECO:0000250" key="7">
    <source>
        <dbReference type="UniProtKB" id="P08617"/>
    </source>
</evidence>
<evidence type="ECO:0000250" key="8">
    <source>
        <dbReference type="UniProtKB" id="P12296"/>
    </source>
</evidence>
<evidence type="ECO:0000250" key="9">
    <source>
        <dbReference type="UniProtKB" id="P13899"/>
    </source>
</evidence>
<evidence type="ECO:0000250" key="10">
    <source>
        <dbReference type="UniProtKB" id="Q66282"/>
    </source>
</evidence>
<evidence type="ECO:0000250" key="11">
    <source>
        <dbReference type="UniProtKB" id="Q66765"/>
    </source>
</evidence>
<evidence type="ECO:0000255" key="12"/>
<evidence type="ECO:0000255" key="13">
    <source>
        <dbReference type="PROSITE-ProRule" id="PRU00539"/>
    </source>
</evidence>
<evidence type="ECO:0000255" key="14">
    <source>
        <dbReference type="PROSITE-ProRule" id="PRU00551"/>
    </source>
</evidence>
<evidence type="ECO:0000255" key="15">
    <source>
        <dbReference type="PROSITE-ProRule" id="PRU01222"/>
    </source>
</evidence>
<evidence type="ECO:0000256" key="16">
    <source>
        <dbReference type="SAM" id="MobiDB-lite"/>
    </source>
</evidence>
<evidence type="ECO:0000269" key="17">
    <source>
    </source>
</evidence>
<evidence type="ECO:0000269" key="18">
    <source>
    </source>
</evidence>
<evidence type="ECO:0000305" key="19"/>
<evidence type="ECO:0000305" key="20">
    <source>
    </source>
</evidence>
<evidence type="ECO:0007829" key="21">
    <source>
        <dbReference type="PDB" id="1TMF"/>
    </source>
</evidence>